<proteinExistence type="inferred from homology"/>
<feature type="chain" id="PRO_0000101841" description="Putative HVA22-like protein g">
    <location>
        <begin position="1"/>
        <end position="177"/>
    </location>
</feature>
<feature type="region of interest" description="Disordered" evidence="1">
    <location>
        <begin position="145"/>
        <end position="165"/>
    </location>
</feature>
<feature type="compositionally biased region" description="Basic and acidic residues" evidence="1">
    <location>
        <begin position="150"/>
        <end position="165"/>
    </location>
</feature>
<reference key="1">
    <citation type="journal article" date="2000" name="Nature">
        <title>Sequence and analysis of chromosome 1 of the plant Arabidopsis thaliana.</title>
        <authorList>
            <person name="Theologis A."/>
            <person name="Ecker J.R."/>
            <person name="Palm C.J."/>
            <person name="Federspiel N.A."/>
            <person name="Kaul S."/>
            <person name="White O."/>
            <person name="Alonso J."/>
            <person name="Altafi H."/>
            <person name="Araujo R."/>
            <person name="Bowman C.L."/>
            <person name="Brooks S.Y."/>
            <person name="Buehler E."/>
            <person name="Chan A."/>
            <person name="Chao Q."/>
            <person name="Chen H."/>
            <person name="Cheuk R.F."/>
            <person name="Chin C.W."/>
            <person name="Chung M.K."/>
            <person name="Conn L."/>
            <person name="Conway A.B."/>
            <person name="Conway A.R."/>
            <person name="Creasy T.H."/>
            <person name="Dewar K."/>
            <person name="Dunn P."/>
            <person name="Etgu P."/>
            <person name="Feldblyum T.V."/>
            <person name="Feng J.-D."/>
            <person name="Fong B."/>
            <person name="Fujii C.Y."/>
            <person name="Gill J.E."/>
            <person name="Goldsmith A.D."/>
            <person name="Haas B."/>
            <person name="Hansen N.F."/>
            <person name="Hughes B."/>
            <person name="Huizar L."/>
            <person name="Hunter J.L."/>
            <person name="Jenkins J."/>
            <person name="Johnson-Hopson C."/>
            <person name="Khan S."/>
            <person name="Khaykin E."/>
            <person name="Kim C.J."/>
            <person name="Koo H.L."/>
            <person name="Kremenetskaia I."/>
            <person name="Kurtz D.B."/>
            <person name="Kwan A."/>
            <person name="Lam B."/>
            <person name="Langin-Hooper S."/>
            <person name="Lee A."/>
            <person name="Lee J.M."/>
            <person name="Lenz C.A."/>
            <person name="Li J.H."/>
            <person name="Li Y.-P."/>
            <person name="Lin X."/>
            <person name="Liu S.X."/>
            <person name="Liu Z.A."/>
            <person name="Luros J.S."/>
            <person name="Maiti R."/>
            <person name="Marziali A."/>
            <person name="Militscher J."/>
            <person name="Miranda M."/>
            <person name="Nguyen M."/>
            <person name="Nierman W.C."/>
            <person name="Osborne B.I."/>
            <person name="Pai G."/>
            <person name="Peterson J."/>
            <person name="Pham P.K."/>
            <person name="Rizzo M."/>
            <person name="Rooney T."/>
            <person name="Rowley D."/>
            <person name="Sakano H."/>
            <person name="Salzberg S.L."/>
            <person name="Schwartz J.R."/>
            <person name="Shinn P."/>
            <person name="Southwick A.M."/>
            <person name="Sun H."/>
            <person name="Tallon L.J."/>
            <person name="Tambunga G."/>
            <person name="Toriumi M.J."/>
            <person name="Town C.D."/>
            <person name="Utterback T."/>
            <person name="Van Aken S."/>
            <person name="Vaysberg M."/>
            <person name="Vysotskaia V.S."/>
            <person name="Walker M."/>
            <person name="Wu D."/>
            <person name="Yu G."/>
            <person name="Fraser C.M."/>
            <person name="Venter J.C."/>
            <person name="Davis R.W."/>
        </authorList>
    </citation>
    <scope>NUCLEOTIDE SEQUENCE [LARGE SCALE GENOMIC DNA]</scope>
    <source>
        <strain>cv. Columbia</strain>
    </source>
</reference>
<reference key="2">
    <citation type="journal article" date="2017" name="Plant J.">
        <title>Araport11: a complete reannotation of the Arabidopsis thaliana reference genome.</title>
        <authorList>
            <person name="Cheng C.Y."/>
            <person name="Krishnakumar V."/>
            <person name="Chan A.P."/>
            <person name="Thibaud-Nissen F."/>
            <person name="Schobel S."/>
            <person name="Town C.D."/>
        </authorList>
    </citation>
    <scope>GENOME REANNOTATION</scope>
    <source>
        <strain>cv. Columbia</strain>
    </source>
</reference>
<dbReference type="EMBL" id="AC006434">
    <property type="protein sequence ID" value="AAF87131.1"/>
    <property type="status" value="ALT_SEQ"/>
    <property type="molecule type" value="Genomic_DNA"/>
</dbReference>
<dbReference type="EMBL" id="CP002684">
    <property type="protein sequence ID" value="AEE35747.1"/>
    <property type="molecule type" value="Genomic_DNA"/>
</dbReference>
<dbReference type="EMBL" id="CP002684">
    <property type="protein sequence ID" value="ANM58614.1"/>
    <property type="molecule type" value="Genomic_DNA"/>
</dbReference>
<dbReference type="PIR" id="F96786">
    <property type="entry name" value="F96786"/>
</dbReference>
<dbReference type="RefSeq" id="NP_001321036.1">
    <property type="nucleotide sequence ID" value="NM_001334692.1"/>
</dbReference>
<dbReference type="RefSeq" id="NP_177699.4">
    <property type="nucleotide sequence ID" value="NM_106221.5"/>
</dbReference>
<dbReference type="FunCoup" id="Q9LR09">
    <property type="interactions" value="783"/>
</dbReference>
<dbReference type="STRING" id="3702.Q9LR09"/>
<dbReference type="PaxDb" id="3702-AT1G75700.1"/>
<dbReference type="ProteomicsDB" id="230379"/>
<dbReference type="EnsemblPlants" id="AT1G75700.1">
    <property type="protein sequence ID" value="AT1G75700.1"/>
    <property type="gene ID" value="AT1G75700"/>
</dbReference>
<dbReference type="EnsemblPlants" id="AT1G75700.2">
    <property type="protein sequence ID" value="AT1G75700.2"/>
    <property type="gene ID" value="AT1G75700"/>
</dbReference>
<dbReference type="GeneID" id="843904"/>
<dbReference type="Gramene" id="AT1G75700.1">
    <property type="protein sequence ID" value="AT1G75700.1"/>
    <property type="gene ID" value="AT1G75700"/>
</dbReference>
<dbReference type="Gramene" id="AT1G75700.2">
    <property type="protein sequence ID" value="AT1G75700.2"/>
    <property type="gene ID" value="AT1G75700"/>
</dbReference>
<dbReference type="KEGG" id="ath:AT1G75700"/>
<dbReference type="Araport" id="AT1G75700"/>
<dbReference type="TAIR" id="AT1G75700">
    <property type="gene designation" value="HVA22G"/>
</dbReference>
<dbReference type="eggNOG" id="KOG1726">
    <property type="taxonomic scope" value="Eukaryota"/>
</dbReference>
<dbReference type="HOGENOM" id="CLU_028431_5_2_1"/>
<dbReference type="InParanoid" id="Q9LR09"/>
<dbReference type="OrthoDB" id="434647at2759"/>
<dbReference type="PRO" id="PR:Q9LR09"/>
<dbReference type="Proteomes" id="UP000006548">
    <property type="component" value="Chromosome 1"/>
</dbReference>
<dbReference type="ExpressionAtlas" id="Q9LR09">
    <property type="expression patterns" value="baseline and differential"/>
</dbReference>
<dbReference type="InterPro" id="IPR004345">
    <property type="entry name" value="TB2_DP1_HVA22"/>
</dbReference>
<dbReference type="PANTHER" id="PTHR12300:SF105">
    <property type="entry name" value="HVA22-LIKE PROTEIN G-RELATED"/>
    <property type="match status" value="1"/>
</dbReference>
<dbReference type="PANTHER" id="PTHR12300">
    <property type="entry name" value="HVA22-LIKE PROTEINS"/>
    <property type="match status" value="1"/>
</dbReference>
<dbReference type="Pfam" id="PF03134">
    <property type="entry name" value="TB2_DP1_HVA22"/>
    <property type="match status" value="1"/>
</dbReference>
<organism>
    <name type="scientific">Arabidopsis thaliana</name>
    <name type="common">Mouse-ear cress</name>
    <dbReference type="NCBI Taxonomy" id="3702"/>
    <lineage>
        <taxon>Eukaryota</taxon>
        <taxon>Viridiplantae</taxon>
        <taxon>Streptophyta</taxon>
        <taxon>Embryophyta</taxon>
        <taxon>Tracheophyta</taxon>
        <taxon>Spermatophyta</taxon>
        <taxon>Magnoliopsida</taxon>
        <taxon>eudicotyledons</taxon>
        <taxon>Gunneridae</taxon>
        <taxon>Pentapetalae</taxon>
        <taxon>rosids</taxon>
        <taxon>malvids</taxon>
        <taxon>Brassicales</taxon>
        <taxon>Brassicaceae</taxon>
        <taxon>Camelineae</taxon>
        <taxon>Arabidopsis</taxon>
    </lineage>
</organism>
<sequence>MIGSFLTRGLLMVFGYAYPAYECFKTVELNKPEIQQLQFWCQYWIIVAALTIFERIGDALVSWLPMYSEAKLAFFIYLWFPKTKGTTYVYDSFFRPYIAKHENEIDRNLVKVKTRAKDMAMIYLQKAINQGQTKFFEILQYITEQSTPKSKAEEKKETTIPKLDDPILKVKENEVTK</sequence>
<gene>
    <name type="primary">HVA22G</name>
    <name type="ordered locus">At1g75700</name>
    <name type="ORF">F10A5.11</name>
</gene>
<keyword id="KW-1185">Reference proteome</keyword>
<protein>
    <recommendedName>
        <fullName>Putative HVA22-like protein g</fullName>
        <shortName>AtHVA22g</shortName>
    </recommendedName>
</protein>
<comment type="similarity">
    <text evidence="2">Belongs to the DP1 family.</text>
</comment>
<comment type="sequence caution" evidence="2">
    <conflict type="erroneous gene model prediction">
        <sequence resource="EMBL-CDS" id="AAF87131"/>
    </conflict>
</comment>
<accession>Q9LR09</accession>
<name>HA22G_ARATH</name>
<evidence type="ECO:0000256" key="1">
    <source>
        <dbReference type="SAM" id="MobiDB-lite"/>
    </source>
</evidence>
<evidence type="ECO:0000305" key="2"/>